<name>RK11_CYACA</name>
<keyword id="KW-0150">Chloroplast</keyword>
<keyword id="KW-0934">Plastid</keyword>
<keyword id="KW-0687">Ribonucleoprotein</keyword>
<keyword id="KW-0689">Ribosomal protein</keyword>
<keyword id="KW-0694">RNA-binding</keyword>
<keyword id="KW-0699">rRNA-binding</keyword>
<comment type="function">
    <text evidence="1">Forms part of the ribosomal stalk which helps the ribosome interact with GTP-bound translation factors.</text>
</comment>
<comment type="subunit">
    <text evidence="1">Part of the ribosomal stalk of the 50S ribosomal subunit. Interacts with L10 and the large rRNA to form the base of the stalk. L10 forms an elongated spine to which L12 dimers bind in a sequential fashion forming a multimeric L10(L12)X complex.</text>
</comment>
<comment type="subcellular location">
    <subcellularLocation>
        <location>Plastid</location>
        <location>Chloroplast</location>
    </subcellularLocation>
</comment>
<comment type="similarity">
    <text evidence="1">Belongs to the universal ribosomal protein uL11 family.</text>
</comment>
<accession>Q9TM01</accession>
<proteinExistence type="inferred from homology"/>
<feature type="chain" id="PRO_0000104422" description="Large ribosomal subunit protein uL11c">
    <location>
        <begin position="1"/>
        <end position="141"/>
    </location>
</feature>
<gene>
    <name evidence="1" type="primary">rpl11</name>
</gene>
<sequence length="141" mass="15358">MIKKIITTVKLALPAGKATPAPPVGPALGQHGVNIMMFVKEYNARTEEQKGSIIPAEIQIYEDKSFTFILKTPPASILLKQATGIEKATKAPRREQVGSISYKEIQNIAKIKINELNTKDLSKAIKIIEGTAKNMGISVET</sequence>
<reference key="1">
    <citation type="journal article" date="2000" name="J. Mol. Evol.">
        <title>The structure and gene repertoire of an ancient red algal plastid genome.</title>
        <authorList>
            <person name="Gloeckner G."/>
            <person name="Rosenthal A."/>
            <person name="Valentin K.-U."/>
        </authorList>
    </citation>
    <scope>NUCLEOTIDE SEQUENCE [LARGE SCALE GENOMIC DNA]</scope>
    <source>
        <strain>RK-1</strain>
    </source>
</reference>
<organism>
    <name type="scientific">Cyanidium caldarium</name>
    <name type="common">Red alga</name>
    <dbReference type="NCBI Taxonomy" id="2771"/>
    <lineage>
        <taxon>Eukaryota</taxon>
        <taxon>Rhodophyta</taxon>
        <taxon>Bangiophyceae</taxon>
        <taxon>Cyanidiales</taxon>
        <taxon>Cyanidiaceae</taxon>
        <taxon>Cyanidium</taxon>
    </lineage>
</organism>
<dbReference type="EMBL" id="AF022186">
    <property type="protein sequence ID" value="AAF12978.1"/>
    <property type="molecule type" value="Genomic_DNA"/>
</dbReference>
<dbReference type="RefSeq" id="NP_045116.1">
    <property type="nucleotide sequence ID" value="NC_001840.1"/>
</dbReference>
<dbReference type="SMR" id="Q9TM01"/>
<dbReference type="GeneID" id="800263"/>
<dbReference type="GO" id="GO:0009507">
    <property type="term" value="C:chloroplast"/>
    <property type="evidence" value="ECO:0007669"/>
    <property type="project" value="UniProtKB-SubCell"/>
</dbReference>
<dbReference type="GO" id="GO:0022625">
    <property type="term" value="C:cytosolic large ribosomal subunit"/>
    <property type="evidence" value="ECO:0007669"/>
    <property type="project" value="TreeGrafter"/>
</dbReference>
<dbReference type="GO" id="GO:0070180">
    <property type="term" value="F:large ribosomal subunit rRNA binding"/>
    <property type="evidence" value="ECO:0007669"/>
    <property type="project" value="UniProtKB-UniRule"/>
</dbReference>
<dbReference type="GO" id="GO:0003735">
    <property type="term" value="F:structural constituent of ribosome"/>
    <property type="evidence" value="ECO:0007669"/>
    <property type="project" value="InterPro"/>
</dbReference>
<dbReference type="GO" id="GO:0006412">
    <property type="term" value="P:translation"/>
    <property type="evidence" value="ECO:0007669"/>
    <property type="project" value="UniProtKB-UniRule"/>
</dbReference>
<dbReference type="CDD" id="cd00349">
    <property type="entry name" value="Ribosomal_L11"/>
    <property type="match status" value="1"/>
</dbReference>
<dbReference type="FunFam" id="3.30.1550.10:FF:000001">
    <property type="entry name" value="50S ribosomal protein L11"/>
    <property type="match status" value="1"/>
</dbReference>
<dbReference type="Gene3D" id="1.10.10.250">
    <property type="entry name" value="Ribosomal protein L11, C-terminal domain"/>
    <property type="match status" value="1"/>
</dbReference>
<dbReference type="Gene3D" id="3.30.1550.10">
    <property type="entry name" value="Ribosomal protein L11/L12, N-terminal domain"/>
    <property type="match status" value="1"/>
</dbReference>
<dbReference type="HAMAP" id="MF_00736">
    <property type="entry name" value="Ribosomal_uL11"/>
    <property type="match status" value="1"/>
</dbReference>
<dbReference type="InterPro" id="IPR000911">
    <property type="entry name" value="Ribosomal_uL11"/>
</dbReference>
<dbReference type="InterPro" id="IPR006519">
    <property type="entry name" value="Ribosomal_uL11_bac-typ"/>
</dbReference>
<dbReference type="InterPro" id="IPR020783">
    <property type="entry name" value="Ribosomal_uL11_C"/>
</dbReference>
<dbReference type="InterPro" id="IPR036769">
    <property type="entry name" value="Ribosomal_uL11_C_sf"/>
</dbReference>
<dbReference type="InterPro" id="IPR020785">
    <property type="entry name" value="Ribosomal_uL11_CS"/>
</dbReference>
<dbReference type="InterPro" id="IPR020784">
    <property type="entry name" value="Ribosomal_uL11_N"/>
</dbReference>
<dbReference type="InterPro" id="IPR036796">
    <property type="entry name" value="Ribosomal_uL11_N_sf"/>
</dbReference>
<dbReference type="NCBIfam" id="TIGR01632">
    <property type="entry name" value="L11_bact"/>
    <property type="match status" value="1"/>
</dbReference>
<dbReference type="PANTHER" id="PTHR11661">
    <property type="entry name" value="60S RIBOSOMAL PROTEIN L12"/>
    <property type="match status" value="1"/>
</dbReference>
<dbReference type="PANTHER" id="PTHR11661:SF1">
    <property type="entry name" value="LARGE RIBOSOMAL SUBUNIT PROTEIN UL11M"/>
    <property type="match status" value="1"/>
</dbReference>
<dbReference type="Pfam" id="PF00298">
    <property type="entry name" value="Ribosomal_L11"/>
    <property type="match status" value="1"/>
</dbReference>
<dbReference type="Pfam" id="PF03946">
    <property type="entry name" value="Ribosomal_L11_N"/>
    <property type="match status" value="1"/>
</dbReference>
<dbReference type="SMART" id="SM00649">
    <property type="entry name" value="RL11"/>
    <property type="match status" value="1"/>
</dbReference>
<dbReference type="SUPFAM" id="SSF54747">
    <property type="entry name" value="Ribosomal L11/L12e N-terminal domain"/>
    <property type="match status" value="1"/>
</dbReference>
<dbReference type="SUPFAM" id="SSF46906">
    <property type="entry name" value="Ribosomal protein L11, C-terminal domain"/>
    <property type="match status" value="1"/>
</dbReference>
<dbReference type="PROSITE" id="PS00359">
    <property type="entry name" value="RIBOSOMAL_L11"/>
    <property type="match status" value="1"/>
</dbReference>
<protein>
    <recommendedName>
        <fullName evidence="1">Large ribosomal subunit protein uL11c</fullName>
    </recommendedName>
    <alternativeName>
        <fullName evidence="2">50S ribosomal protein L11, chloroplastic</fullName>
    </alternativeName>
</protein>
<geneLocation type="chloroplast"/>
<evidence type="ECO:0000255" key="1">
    <source>
        <dbReference type="HAMAP-Rule" id="MF_00736"/>
    </source>
</evidence>
<evidence type="ECO:0000305" key="2"/>